<keyword id="KW-0175">Coiled coil</keyword>
<keyword id="KW-0963">Cytoplasm</keyword>
<keyword id="KW-0378">Hydrolase</keyword>
<keyword id="KW-0507">mRNA processing</keyword>
<keyword id="KW-0539">Nucleus</keyword>
<keyword id="KW-0904">Protein phosphatase</keyword>
<keyword id="KW-1185">Reference proteome</keyword>
<proteinExistence type="evidence at transcript level"/>
<name>SSU72_DANRE</name>
<evidence type="ECO:0000250" key="1"/>
<evidence type="ECO:0000255" key="2"/>
<evidence type="ECO:0000305" key="3"/>
<comment type="function">
    <text evidence="1">May be involved in the C-terminal domain of RNA polymerase II dephosphorylation, RNA processing and termination.</text>
</comment>
<comment type="catalytic activity">
    <reaction>
        <text>O-phospho-L-seryl-[protein] + H2O = L-seryl-[protein] + phosphate</text>
        <dbReference type="Rhea" id="RHEA:20629"/>
        <dbReference type="Rhea" id="RHEA-COMP:9863"/>
        <dbReference type="Rhea" id="RHEA-COMP:11604"/>
        <dbReference type="ChEBI" id="CHEBI:15377"/>
        <dbReference type="ChEBI" id="CHEBI:29999"/>
        <dbReference type="ChEBI" id="CHEBI:43474"/>
        <dbReference type="ChEBI" id="CHEBI:83421"/>
        <dbReference type="EC" id="3.1.3.16"/>
    </reaction>
</comment>
<comment type="catalytic activity">
    <reaction>
        <text>O-phospho-L-threonyl-[protein] + H2O = L-threonyl-[protein] + phosphate</text>
        <dbReference type="Rhea" id="RHEA:47004"/>
        <dbReference type="Rhea" id="RHEA-COMP:11060"/>
        <dbReference type="Rhea" id="RHEA-COMP:11605"/>
        <dbReference type="ChEBI" id="CHEBI:15377"/>
        <dbReference type="ChEBI" id="CHEBI:30013"/>
        <dbReference type="ChEBI" id="CHEBI:43474"/>
        <dbReference type="ChEBI" id="CHEBI:61977"/>
        <dbReference type="EC" id="3.1.3.16"/>
    </reaction>
</comment>
<comment type="subcellular location">
    <subcellularLocation>
        <location evidence="1">Nucleus</location>
    </subcellularLocation>
    <subcellularLocation>
        <location evidence="1">Cytoplasm</location>
    </subcellularLocation>
    <text evidence="1">Predominantly in the cytosol.</text>
</comment>
<comment type="similarity">
    <text evidence="3">Belongs to the SSU72 phosphatase family.</text>
</comment>
<sequence>MPPHPLRVAVVCSSNQNRSMEAHNILSKRGFDVRSFGTGTHVKLPGPAPDKPNIYDFKTTYEQMYNDLVRKDKELYTQNGILHMLDRNKRIKSRPERFQSCRDQFDLVITCEERVYDQVLEDLNSREQESFQPVHVINVDIQDNHEEATLGAFLICELCQCIQHTDDMENEMDELLQEFEEKSHRPFLHSVCFY</sequence>
<gene>
    <name type="primary">ssu72</name>
    <name type="ORF">zgc:73143</name>
</gene>
<accession>Q6PC19</accession>
<dbReference type="EC" id="3.1.3.16"/>
<dbReference type="EMBL" id="BC059504">
    <property type="protein sequence ID" value="AAH59504.1"/>
    <property type="molecule type" value="mRNA"/>
</dbReference>
<dbReference type="RefSeq" id="NP_957022.1">
    <property type="nucleotide sequence ID" value="NM_200728.1"/>
</dbReference>
<dbReference type="SMR" id="Q6PC19"/>
<dbReference type="FunCoup" id="Q6PC19">
    <property type="interactions" value="2510"/>
</dbReference>
<dbReference type="STRING" id="7955.ENSDARP00000041894"/>
<dbReference type="PaxDb" id="7955-ENSDARP00000041894"/>
<dbReference type="Ensembl" id="ENSDART00000041895">
    <property type="protein sequence ID" value="ENSDARP00000041894"/>
    <property type="gene ID" value="ENSDARG00000031216"/>
</dbReference>
<dbReference type="GeneID" id="393701"/>
<dbReference type="KEGG" id="dre:393701"/>
<dbReference type="AGR" id="ZFIN:ZDB-GENE-040426-1689"/>
<dbReference type="CTD" id="29101"/>
<dbReference type="ZFIN" id="ZDB-GENE-040426-1689">
    <property type="gene designation" value="ssu72"/>
</dbReference>
<dbReference type="eggNOG" id="KOG2424">
    <property type="taxonomic scope" value="Eukaryota"/>
</dbReference>
<dbReference type="HOGENOM" id="CLU_062463_2_1_1"/>
<dbReference type="InParanoid" id="Q6PC19"/>
<dbReference type="OMA" id="PNCYEFG"/>
<dbReference type="OrthoDB" id="57957at2759"/>
<dbReference type="PhylomeDB" id="Q6PC19"/>
<dbReference type="TreeFam" id="TF300194"/>
<dbReference type="Reactome" id="R-DRE-6807505">
    <property type="pathway name" value="RNA polymerase II transcribes snRNA genes"/>
</dbReference>
<dbReference type="PRO" id="PR:Q6PC19"/>
<dbReference type="Proteomes" id="UP000000437">
    <property type="component" value="Chromosome 22"/>
</dbReference>
<dbReference type="Bgee" id="ENSDARG00000031216">
    <property type="expression patterns" value="Expressed in granulocyte and 30 other cell types or tissues"/>
</dbReference>
<dbReference type="GO" id="GO:0005737">
    <property type="term" value="C:cytoplasm"/>
    <property type="evidence" value="ECO:0007669"/>
    <property type="project" value="UniProtKB-SubCell"/>
</dbReference>
<dbReference type="GO" id="GO:0005847">
    <property type="term" value="C:mRNA cleavage and polyadenylation specificity factor complex"/>
    <property type="evidence" value="ECO:0000318"/>
    <property type="project" value="GO_Central"/>
</dbReference>
<dbReference type="GO" id="GO:0008420">
    <property type="term" value="F:RNA polymerase II CTD heptapeptide repeat phosphatase activity"/>
    <property type="evidence" value="ECO:0000318"/>
    <property type="project" value="GO_Central"/>
</dbReference>
<dbReference type="GO" id="GO:0006397">
    <property type="term" value="P:mRNA processing"/>
    <property type="evidence" value="ECO:0007669"/>
    <property type="project" value="UniProtKB-KW"/>
</dbReference>
<dbReference type="GO" id="GO:0006369">
    <property type="term" value="P:termination of RNA polymerase II transcription"/>
    <property type="evidence" value="ECO:0000318"/>
    <property type="project" value="GO_Central"/>
</dbReference>
<dbReference type="FunFam" id="3.40.50.2300:FF:000039">
    <property type="entry name" value="RNA polymerase II subunit A C-terminal domain phosphatase"/>
    <property type="match status" value="1"/>
</dbReference>
<dbReference type="FunFam" id="3.40.50.2300:FF:000066">
    <property type="entry name" value="RNA polymerase II subunit A C-terminal domain phosphatase SSU72"/>
    <property type="match status" value="1"/>
</dbReference>
<dbReference type="Gene3D" id="3.40.50.2300">
    <property type="match status" value="2"/>
</dbReference>
<dbReference type="InterPro" id="IPR006811">
    <property type="entry name" value="RNA_pol_II_suA"/>
</dbReference>
<dbReference type="PANTHER" id="PTHR20383">
    <property type="entry name" value="RNA POLYMERASE II SUBUNIT A C-TERMINAL DOMAIN PHOSPHATASE"/>
    <property type="match status" value="1"/>
</dbReference>
<dbReference type="Pfam" id="PF04722">
    <property type="entry name" value="Ssu72"/>
    <property type="match status" value="1"/>
</dbReference>
<organism>
    <name type="scientific">Danio rerio</name>
    <name type="common">Zebrafish</name>
    <name type="synonym">Brachydanio rerio</name>
    <dbReference type="NCBI Taxonomy" id="7955"/>
    <lineage>
        <taxon>Eukaryota</taxon>
        <taxon>Metazoa</taxon>
        <taxon>Chordata</taxon>
        <taxon>Craniata</taxon>
        <taxon>Vertebrata</taxon>
        <taxon>Euteleostomi</taxon>
        <taxon>Actinopterygii</taxon>
        <taxon>Neopterygii</taxon>
        <taxon>Teleostei</taxon>
        <taxon>Ostariophysi</taxon>
        <taxon>Cypriniformes</taxon>
        <taxon>Danionidae</taxon>
        <taxon>Danioninae</taxon>
        <taxon>Danio</taxon>
    </lineage>
</organism>
<reference key="1">
    <citation type="submission" date="2003-10" db="EMBL/GenBank/DDBJ databases">
        <authorList>
            <consortium name="NIH - Zebrafish Gene Collection (ZGC) project"/>
        </authorList>
    </citation>
    <scope>NUCLEOTIDE SEQUENCE [LARGE SCALE MRNA]</scope>
    <source>
        <strain>Wild-type</strain>
        <tissue>Eye</tissue>
    </source>
</reference>
<protein>
    <recommendedName>
        <fullName>RNA polymerase II subunit A C-terminal domain phosphatase SSU72</fullName>
        <shortName>CTD phosphatase SSU72</shortName>
        <ecNumber>3.1.3.16</ecNumber>
    </recommendedName>
</protein>
<feature type="chain" id="PRO_0000330016" description="RNA polymerase II subunit A C-terminal domain phosphatase SSU72">
    <location>
        <begin position="1"/>
        <end position="194"/>
    </location>
</feature>
<feature type="coiled-coil region" evidence="2">
    <location>
        <begin position="160"/>
        <end position="185"/>
    </location>
</feature>